<reference key="1">
    <citation type="journal article" date="2004" name="Mar. Environ. Res.">
        <title>Identification of constitutive androstane receptor cDNA in northern fur seal (Callorhinus ursinus).</title>
        <authorList>
            <person name="Sakai H."/>
            <person name="Iwata H."/>
            <person name="Kim E.Y."/>
            <person name="Tanabe S."/>
            <person name="Baba N."/>
        </authorList>
    </citation>
    <scope>NUCLEOTIDE SEQUENCE [MRNA]</scope>
</reference>
<proteinExistence type="evidence at transcript level"/>
<name>NR1I3_PUSSI</name>
<keyword id="KW-0010">Activator</keyword>
<keyword id="KW-0963">Cytoplasm</keyword>
<keyword id="KW-0206">Cytoskeleton</keyword>
<keyword id="KW-0238">DNA-binding</keyword>
<keyword id="KW-0479">Metal-binding</keyword>
<keyword id="KW-0539">Nucleus</keyword>
<keyword id="KW-0597">Phosphoprotein</keyword>
<keyword id="KW-0675">Receptor</keyword>
<keyword id="KW-0804">Transcription</keyword>
<keyword id="KW-0805">Transcription regulation</keyword>
<keyword id="KW-0862">Zinc</keyword>
<keyword id="KW-0863">Zinc-finger</keyword>
<accession>P62045</accession>
<organism>
    <name type="scientific">Pusa sibirica</name>
    <name type="common">Baikal seal</name>
    <name type="synonym">Phoca sibirica</name>
    <dbReference type="NCBI Taxonomy" id="9719"/>
    <lineage>
        <taxon>Eukaryota</taxon>
        <taxon>Metazoa</taxon>
        <taxon>Chordata</taxon>
        <taxon>Craniata</taxon>
        <taxon>Vertebrata</taxon>
        <taxon>Euteleostomi</taxon>
        <taxon>Mammalia</taxon>
        <taxon>Eutheria</taxon>
        <taxon>Laurasiatheria</taxon>
        <taxon>Carnivora</taxon>
        <taxon>Caniformia</taxon>
        <taxon>Pinnipedia</taxon>
        <taxon>Phocidae</taxon>
        <taxon>Phocinae</taxon>
        <taxon>Pusa</taxon>
    </lineage>
</organism>
<gene>
    <name type="primary">NR1I3</name>
    <name type="synonym">CAR</name>
</gene>
<evidence type="ECO:0000250" key="1"/>
<evidence type="ECO:0000250" key="2">
    <source>
        <dbReference type="UniProtKB" id="O35627"/>
    </source>
</evidence>
<evidence type="ECO:0000250" key="3">
    <source>
        <dbReference type="UniProtKB" id="Q14994"/>
    </source>
</evidence>
<evidence type="ECO:0000255" key="4">
    <source>
        <dbReference type="PROSITE-ProRule" id="PRU00407"/>
    </source>
</evidence>
<evidence type="ECO:0000255" key="5">
    <source>
        <dbReference type="PROSITE-ProRule" id="PRU01189"/>
    </source>
</evidence>
<evidence type="ECO:0000305" key="6"/>
<protein>
    <recommendedName>
        <fullName>Nuclear receptor subfamily 1 group I member 3</fullName>
    </recommendedName>
    <alternativeName>
        <fullName>Constitutive androstane receptor</fullName>
        <shortName>CAR</shortName>
    </alternativeName>
</protein>
<comment type="function">
    <text evidence="1">Binds and transactivates the retinoic acid response elements that control expression of the retinoic acid receptor beta 2 and alcohol dehydrogenase 3 genes. Transactivates both the phenobarbital responsive element module of the human CYP2B6 gene and the CYP3A4 xenobiotic response element (By similarity).</text>
</comment>
<comment type="subunit">
    <text evidence="2">Heterodimer of NR1I3 and RXR. Interacts with PSMC4. Interacts with ECT2. Directly interacts with DNAJC7; this complex may also include HSP90 (By similarity). Interacts with CRY1 (By similarity). Interacts with CRY2 in a ligand-dependent manner (By similarity).</text>
</comment>
<comment type="subcellular location">
    <subcellularLocation>
        <location evidence="4">Nucleus</location>
    </subcellularLocation>
    <subcellularLocation>
        <location evidence="1">Cytoplasm</location>
    </subcellularLocation>
    <subcellularLocation>
        <location evidence="1">Cytoplasm</location>
        <location evidence="1">Cytoskeleton</location>
    </subcellularLocation>
    <text evidence="1">Recruited to the cytoplasm by DNAJC7.</text>
</comment>
<comment type="domain">
    <text>Composed by a short N-terminal domain followed by the DNA binding, hinge, and ligand binding/dimerization domains.</text>
</comment>
<comment type="PTM">
    <text evidence="1">Phosphorylated at Thr-38 by PKC, dephosphorylation of Thr-38 is required for nuclear translocation and activation.</text>
</comment>
<comment type="similarity">
    <text evidence="6">Belongs to the nuclear hormone receptor family. NR1 subfamily.</text>
</comment>
<sequence>MASGEDGPRSCMVCGDRATGYHFHALTCEGCKGFFRRTVSKNTGLTCPFAGSCKVNKAQRRHCPACRLQKCLDAGMKKEMILSAEALAQRRAKQAQRRAQWAAVQLSKGQQELVQTLLGAHARHVGTMFDQFVQFRPPAHLFIHHQRLPIPLPPLPLLEHFAEVNTFMVQQVIKFTKDLPLFRSLPMEDQISLLKGAAVEICHIALNTTFCLQTRNFLCGPLRYTLEDGVHVGFQEEFLELLFRFHATLRRFQLQEPEYVLMAAMALFSPDRPGVTQKEEIDRLQEMMALTLQSYIKGQPPRHRDRFLYAKLLGLLAELRSINNAYGYQIQHIQGLSAMMPLLQEICS</sequence>
<dbReference type="EMBL" id="AB109553">
    <property type="protein sequence ID" value="BAD00038.1"/>
    <property type="molecule type" value="mRNA"/>
</dbReference>
<dbReference type="SMR" id="P62045"/>
<dbReference type="GO" id="GO:0005737">
    <property type="term" value="C:cytoplasm"/>
    <property type="evidence" value="ECO:0000250"/>
    <property type="project" value="UniProtKB"/>
</dbReference>
<dbReference type="GO" id="GO:0005856">
    <property type="term" value="C:cytoskeleton"/>
    <property type="evidence" value="ECO:0007669"/>
    <property type="project" value="UniProtKB-SubCell"/>
</dbReference>
<dbReference type="GO" id="GO:0005634">
    <property type="term" value="C:nucleus"/>
    <property type="evidence" value="ECO:0000250"/>
    <property type="project" value="UniProtKB"/>
</dbReference>
<dbReference type="GO" id="GO:0004879">
    <property type="term" value="F:nuclear receptor activity"/>
    <property type="evidence" value="ECO:0007669"/>
    <property type="project" value="InterPro"/>
</dbReference>
<dbReference type="GO" id="GO:0000978">
    <property type="term" value="F:RNA polymerase II cis-regulatory region sequence-specific DNA binding"/>
    <property type="evidence" value="ECO:0007669"/>
    <property type="project" value="TreeGrafter"/>
</dbReference>
<dbReference type="GO" id="GO:0008270">
    <property type="term" value="F:zinc ion binding"/>
    <property type="evidence" value="ECO:0007669"/>
    <property type="project" value="UniProtKB-KW"/>
</dbReference>
<dbReference type="GO" id="GO:0030154">
    <property type="term" value="P:cell differentiation"/>
    <property type="evidence" value="ECO:0007669"/>
    <property type="project" value="TreeGrafter"/>
</dbReference>
<dbReference type="GO" id="GO:0000122">
    <property type="term" value="P:negative regulation of transcription by RNA polymerase II"/>
    <property type="evidence" value="ECO:0007669"/>
    <property type="project" value="TreeGrafter"/>
</dbReference>
<dbReference type="GO" id="GO:0045944">
    <property type="term" value="P:positive regulation of transcription by RNA polymerase II"/>
    <property type="evidence" value="ECO:0007669"/>
    <property type="project" value="TreeGrafter"/>
</dbReference>
<dbReference type="CDD" id="cd07156">
    <property type="entry name" value="NR_DBD_VDR_like"/>
    <property type="match status" value="1"/>
</dbReference>
<dbReference type="FunFam" id="1.10.565.10:FF:000025">
    <property type="entry name" value="Nuclear receptor subfamily 1 group I member 3"/>
    <property type="match status" value="1"/>
</dbReference>
<dbReference type="FunFam" id="3.30.50.10:FF:000035">
    <property type="entry name" value="Nuclear receptor subfamily 1 group I member 3"/>
    <property type="match status" value="1"/>
</dbReference>
<dbReference type="Gene3D" id="3.30.50.10">
    <property type="entry name" value="Erythroid Transcription Factor GATA-1, subunit A"/>
    <property type="match status" value="1"/>
</dbReference>
<dbReference type="Gene3D" id="1.10.565.10">
    <property type="entry name" value="Retinoid X Receptor"/>
    <property type="match status" value="1"/>
</dbReference>
<dbReference type="InterPro" id="IPR035500">
    <property type="entry name" value="NHR-like_dom_sf"/>
</dbReference>
<dbReference type="InterPro" id="IPR000536">
    <property type="entry name" value="Nucl_hrmn_rcpt_lig-bd"/>
</dbReference>
<dbReference type="InterPro" id="IPR050234">
    <property type="entry name" value="Nuclear_hormone_rcpt_NR1"/>
</dbReference>
<dbReference type="InterPro" id="IPR001723">
    <property type="entry name" value="Nuclear_hrmn_rcpt"/>
</dbReference>
<dbReference type="InterPro" id="IPR001728">
    <property type="entry name" value="ThyrH_rcpt"/>
</dbReference>
<dbReference type="InterPro" id="IPR001628">
    <property type="entry name" value="Znf_hrmn_rcpt"/>
</dbReference>
<dbReference type="InterPro" id="IPR013088">
    <property type="entry name" value="Znf_NHR/GATA"/>
</dbReference>
<dbReference type="PANTHER" id="PTHR24082">
    <property type="entry name" value="NUCLEAR HORMONE RECEPTOR"/>
    <property type="match status" value="1"/>
</dbReference>
<dbReference type="PANTHER" id="PTHR24082:SF231">
    <property type="entry name" value="NUCLEAR RECEPTOR SUBFAMILY 1 GROUP I MEMBER 3"/>
    <property type="match status" value="1"/>
</dbReference>
<dbReference type="Pfam" id="PF00104">
    <property type="entry name" value="Hormone_recep"/>
    <property type="match status" value="1"/>
</dbReference>
<dbReference type="Pfam" id="PF00105">
    <property type="entry name" value="zf-C4"/>
    <property type="match status" value="1"/>
</dbReference>
<dbReference type="PRINTS" id="PR00398">
    <property type="entry name" value="STRDHORMONER"/>
</dbReference>
<dbReference type="PRINTS" id="PR00047">
    <property type="entry name" value="STROIDFINGER"/>
</dbReference>
<dbReference type="PRINTS" id="PR00546">
    <property type="entry name" value="THYROIDHORMR"/>
</dbReference>
<dbReference type="SMART" id="SM00430">
    <property type="entry name" value="HOLI"/>
    <property type="match status" value="1"/>
</dbReference>
<dbReference type="SMART" id="SM00399">
    <property type="entry name" value="ZnF_C4"/>
    <property type="match status" value="1"/>
</dbReference>
<dbReference type="SUPFAM" id="SSF57716">
    <property type="entry name" value="Glucocorticoid receptor-like (DNA-binding domain)"/>
    <property type="match status" value="1"/>
</dbReference>
<dbReference type="SUPFAM" id="SSF48508">
    <property type="entry name" value="Nuclear receptor ligand-binding domain"/>
    <property type="match status" value="1"/>
</dbReference>
<dbReference type="PROSITE" id="PS51843">
    <property type="entry name" value="NR_LBD"/>
    <property type="match status" value="1"/>
</dbReference>
<dbReference type="PROSITE" id="PS00031">
    <property type="entry name" value="NUCLEAR_REC_DBD_1"/>
    <property type="match status" value="1"/>
</dbReference>
<dbReference type="PROSITE" id="PS51030">
    <property type="entry name" value="NUCLEAR_REC_DBD_2"/>
    <property type="match status" value="1"/>
</dbReference>
<feature type="chain" id="PRO_0000053555" description="Nuclear receptor subfamily 1 group I member 3">
    <location>
        <begin position="1"/>
        <end position="348"/>
    </location>
</feature>
<feature type="domain" description="NR LBD" evidence="5">
    <location>
        <begin position="109"/>
        <end position="348"/>
    </location>
</feature>
<feature type="DNA-binding region" description="Nuclear receptor" evidence="4">
    <location>
        <begin position="8"/>
        <end position="83"/>
    </location>
</feature>
<feature type="zinc finger region" description="NR C4-type" evidence="4">
    <location>
        <begin position="11"/>
        <end position="31"/>
    </location>
</feature>
<feature type="zinc finger region" description="NR C4-type" evidence="4">
    <location>
        <begin position="47"/>
        <end position="71"/>
    </location>
</feature>
<feature type="modified residue" description="Phosphothreonine; by PKC" evidence="3">
    <location>
        <position position="38"/>
    </location>
</feature>